<feature type="chain" id="PRO_0000061941" description="Gluconate permease">
    <location>
        <begin position="1"/>
        <end position="450"/>
    </location>
</feature>
<feature type="transmembrane region" description="Helical" evidence="1">
    <location>
        <begin position="6"/>
        <end position="26"/>
    </location>
</feature>
<feature type="transmembrane region" description="Helical" evidence="1">
    <location>
        <begin position="30"/>
        <end position="50"/>
    </location>
</feature>
<feature type="transmembrane region" description="Helical" evidence="1">
    <location>
        <begin position="60"/>
        <end position="80"/>
    </location>
</feature>
<feature type="transmembrane region" description="Helical" evidence="1">
    <location>
        <begin position="116"/>
        <end position="136"/>
    </location>
</feature>
<feature type="transmembrane region" description="Helical" evidence="1">
    <location>
        <begin position="142"/>
        <end position="162"/>
    </location>
</feature>
<feature type="transmembrane region" description="Helical" evidence="1">
    <location>
        <begin position="183"/>
        <end position="203"/>
    </location>
</feature>
<feature type="transmembrane region" description="Helical" evidence="1">
    <location>
        <begin position="233"/>
        <end position="253"/>
    </location>
</feature>
<feature type="transmembrane region" description="Helical" evidence="1">
    <location>
        <begin position="269"/>
        <end position="289"/>
    </location>
</feature>
<feature type="transmembrane region" description="Helical" evidence="1">
    <location>
        <begin position="312"/>
        <end position="332"/>
    </location>
</feature>
<feature type="transmembrane region" description="Helical" evidence="1">
    <location>
        <begin position="338"/>
        <end position="358"/>
    </location>
</feature>
<feature type="transmembrane region" description="Helical" evidence="1">
    <location>
        <begin position="366"/>
        <end position="386"/>
    </location>
</feature>
<feature type="transmembrane region" description="Helical" evidence="1">
    <location>
        <begin position="430"/>
        <end position="450"/>
    </location>
</feature>
<dbReference type="EMBL" id="AF026470">
    <property type="protein sequence ID" value="AAD01803.1"/>
    <property type="molecule type" value="Genomic_DNA"/>
</dbReference>
<dbReference type="EMBL" id="AE004091">
    <property type="protein sequence ID" value="AAG05710.1"/>
    <property type="molecule type" value="Genomic_DNA"/>
</dbReference>
<dbReference type="PIR" id="E83355">
    <property type="entry name" value="E83355"/>
</dbReference>
<dbReference type="RefSeq" id="NP_251012.1">
    <property type="nucleotide sequence ID" value="NC_002516.2"/>
</dbReference>
<dbReference type="RefSeq" id="WP_003107128.1">
    <property type="nucleotide sequence ID" value="NZ_QZGE01000021.1"/>
</dbReference>
<dbReference type="FunCoup" id="Q9ZIJ1">
    <property type="interactions" value="310"/>
</dbReference>
<dbReference type="STRING" id="208964.PA2322"/>
<dbReference type="PaxDb" id="208964-PA2322"/>
<dbReference type="DNASU" id="883019"/>
<dbReference type="GeneID" id="883019"/>
<dbReference type="KEGG" id="pae:PA2322"/>
<dbReference type="PATRIC" id="fig|208964.12.peg.2427"/>
<dbReference type="PseudoCAP" id="PA2322"/>
<dbReference type="HOGENOM" id="CLU_027949_0_2_6"/>
<dbReference type="InParanoid" id="Q9ZIJ1"/>
<dbReference type="OrthoDB" id="9787129at2"/>
<dbReference type="PhylomeDB" id="Q9ZIJ1"/>
<dbReference type="BioCyc" id="PAER208964:G1FZ6-2361-MONOMER"/>
<dbReference type="UniPathway" id="UPA00792"/>
<dbReference type="Proteomes" id="UP000002438">
    <property type="component" value="Chromosome"/>
</dbReference>
<dbReference type="GO" id="GO:0005886">
    <property type="term" value="C:plasma membrane"/>
    <property type="evidence" value="ECO:0000318"/>
    <property type="project" value="GO_Central"/>
</dbReference>
<dbReference type="GO" id="GO:0015128">
    <property type="term" value="F:gluconate transmembrane transporter activity"/>
    <property type="evidence" value="ECO:0000318"/>
    <property type="project" value="GO_Central"/>
</dbReference>
<dbReference type="GO" id="GO:0019521">
    <property type="term" value="P:D-gluconate metabolic process"/>
    <property type="evidence" value="ECO:0007669"/>
    <property type="project" value="UniProtKB-KW"/>
</dbReference>
<dbReference type="GO" id="GO:0035429">
    <property type="term" value="P:gluconate transmembrane transport"/>
    <property type="evidence" value="ECO:0000318"/>
    <property type="project" value="GO_Central"/>
</dbReference>
<dbReference type="InterPro" id="IPR003474">
    <property type="entry name" value="Glcn_transporter"/>
</dbReference>
<dbReference type="NCBIfam" id="TIGR00791">
    <property type="entry name" value="gntP"/>
    <property type="match status" value="1"/>
</dbReference>
<dbReference type="PANTHER" id="PTHR30354">
    <property type="entry name" value="GNT FAMILY GLUCONATE TRANSPORTER"/>
    <property type="match status" value="1"/>
</dbReference>
<dbReference type="PANTHER" id="PTHR30354:SF22">
    <property type="entry name" value="HIGH-AFFINITY GLUCONATE TRANSPORTER"/>
    <property type="match status" value="1"/>
</dbReference>
<dbReference type="Pfam" id="PF02447">
    <property type="entry name" value="GntP_permease"/>
    <property type="match status" value="1"/>
</dbReference>
<dbReference type="PIRSF" id="PIRSF002746">
    <property type="entry name" value="Gluconate_transporter"/>
    <property type="match status" value="1"/>
</dbReference>
<organism>
    <name type="scientific">Pseudomonas aeruginosa (strain ATCC 15692 / DSM 22644 / CIP 104116 / JCM 14847 / LMG 12228 / 1C / PRS 101 / PAO1)</name>
    <dbReference type="NCBI Taxonomy" id="208964"/>
    <lineage>
        <taxon>Bacteria</taxon>
        <taxon>Pseudomonadati</taxon>
        <taxon>Pseudomonadota</taxon>
        <taxon>Gammaproteobacteria</taxon>
        <taxon>Pseudomonadales</taxon>
        <taxon>Pseudomonadaceae</taxon>
        <taxon>Pseudomonas</taxon>
    </lineage>
</organism>
<gene>
    <name type="primary">gnuT</name>
    <name type="ordered locus">PA2322</name>
</gene>
<keyword id="KW-0997">Cell inner membrane</keyword>
<keyword id="KW-1003">Cell membrane</keyword>
<keyword id="KW-0311">Gluconate utilization</keyword>
<keyword id="KW-0472">Membrane</keyword>
<keyword id="KW-1185">Reference proteome</keyword>
<keyword id="KW-0762">Sugar transport</keyword>
<keyword id="KW-0812">Transmembrane</keyword>
<keyword id="KW-1133">Transmembrane helix</keyword>
<keyword id="KW-0813">Transport</keyword>
<comment type="pathway">
    <text>Carbohydrate acid metabolism; D-gluconate degradation.</text>
</comment>
<comment type="subcellular location">
    <subcellularLocation>
        <location evidence="2">Cell inner membrane</location>
        <topology evidence="2">Multi-pass membrane protein</topology>
    </subcellularLocation>
</comment>
<comment type="similarity">
    <text evidence="2">Belongs to the GntP permease family.</text>
</comment>
<name>GNUT_PSEAE</name>
<accession>Q9ZIJ1</accession>
<proteinExistence type="inferred from homology"/>
<evidence type="ECO:0000255" key="1"/>
<evidence type="ECO:0000305" key="2"/>
<protein>
    <recommendedName>
        <fullName>Gluconate permease</fullName>
    </recommendedName>
</protein>
<sequence>MFGMSHDAYLLLDALVTIIGLIVLITRFKVHPFIALIIAAGFLGLTSGMPVEKIVKSFQDGFGGVLGFVGVILALGTMLGKLMADSGGADQIARTLIRAFGKERVHWSMMLAAFLVGIPLFFEIGFILLIPLVFIVARRSGVSLIKIGIPLLAGLSAVHGLVPPHPGPLLAIGVFGADIGKTILYGLIVALPTAAIAGPLFGALVSRYIPGTPSAELVEQIAHEPETQDLPSFGVTLATVLLPVFLMLLKTFADVAFPDGHAFRAWMDMIGHPISALLLALLVALYTFGYARGFDSKKILRLLDQSLAPTAAIVMIIGAGGGFKQMLVASGVGDVIGHLAVNAQISPILLAWLVAAVIRIATGSATVATITGAGIVVPVIDLIPGVNRELLVLATGAGSLILSHVNDAGFWLVKQYFNMSVSETFKTWTAMETILSVVGLVFILLLSLVL</sequence>
<reference key="1">
    <citation type="submission" date="1997-09" db="EMBL/GenBank/DDBJ databases">
        <title>Cloning and sequence analysis of the gluconate operon of Pseudomonas aeruginosa PAO.</title>
        <authorList>
            <person name="Hager P.W."/>
            <person name="Covert-Rinaldi A."/>
            <person name="Wallace W.H."/>
            <person name="Phibbs P.V. Jr."/>
        </authorList>
    </citation>
    <scope>NUCLEOTIDE SEQUENCE [GENOMIC DNA]</scope>
    <source>
        <strain>ATCC 15692 / DSM 22644 / CIP 104116 / JCM 14847 / LMG 12228 / 1C / PRS 101 / PAO1</strain>
    </source>
</reference>
<reference key="2">
    <citation type="journal article" date="2000" name="Nature">
        <title>Complete genome sequence of Pseudomonas aeruginosa PAO1, an opportunistic pathogen.</title>
        <authorList>
            <person name="Stover C.K."/>
            <person name="Pham X.-Q.T."/>
            <person name="Erwin A.L."/>
            <person name="Mizoguchi S.D."/>
            <person name="Warrener P."/>
            <person name="Hickey M.J."/>
            <person name="Brinkman F.S.L."/>
            <person name="Hufnagle W.O."/>
            <person name="Kowalik D.J."/>
            <person name="Lagrou M."/>
            <person name="Garber R.L."/>
            <person name="Goltry L."/>
            <person name="Tolentino E."/>
            <person name="Westbrock-Wadman S."/>
            <person name="Yuan Y."/>
            <person name="Brody L.L."/>
            <person name="Coulter S.N."/>
            <person name="Folger K.R."/>
            <person name="Kas A."/>
            <person name="Larbig K."/>
            <person name="Lim R.M."/>
            <person name="Smith K.A."/>
            <person name="Spencer D.H."/>
            <person name="Wong G.K.-S."/>
            <person name="Wu Z."/>
            <person name="Paulsen I.T."/>
            <person name="Reizer J."/>
            <person name="Saier M.H. Jr."/>
            <person name="Hancock R.E.W."/>
            <person name="Lory S."/>
            <person name="Olson M.V."/>
        </authorList>
    </citation>
    <scope>NUCLEOTIDE SEQUENCE [LARGE SCALE GENOMIC DNA]</scope>
    <source>
        <strain>ATCC 15692 / DSM 22644 / CIP 104116 / JCM 14847 / LMG 12228 / 1C / PRS 101 / PAO1</strain>
    </source>
</reference>